<proteinExistence type="evidence at protein level"/>
<gene>
    <name type="primary">EnP1</name>
    <name type="ordered locus">ECU01_0820</name>
</gene>
<dbReference type="EMBL" id="AL391737">
    <property type="protein sequence ID" value="CAD24952.1"/>
    <property type="molecule type" value="Genomic_DNA"/>
</dbReference>
<dbReference type="RefSeq" id="XP_965917.1">
    <property type="nucleotide sequence ID" value="XM_960824.1"/>
</dbReference>
<dbReference type="STRING" id="284813.Q8SWL3"/>
<dbReference type="GlyCosmos" id="Q8SWL3">
    <property type="glycosylation" value="1 site, No reported glycans"/>
</dbReference>
<dbReference type="VEuPathDB" id="MicrosporidiaDB:ECU01_0820"/>
<dbReference type="HOGENOM" id="CLU_715897_0_0_1"/>
<dbReference type="InParanoid" id="Q8SWL3"/>
<dbReference type="OMA" id="PRICKEK"/>
<dbReference type="OrthoDB" id="2191612at2759"/>
<dbReference type="Proteomes" id="UP000000819">
    <property type="component" value="Chromosome I"/>
</dbReference>
<dbReference type="GO" id="GO:0031160">
    <property type="term" value="C:spore wall"/>
    <property type="evidence" value="ECO:0000314"/>
    <property type="project" value="CACAO"/>
</dbReference>
<dbReference type="GO" id="GO:0007155">
    <property type="term" value="P:cell adhesion"/>
    <property type="evidence" value="ECO:0007669"/>
    <property type="project" value="UniProtKB-KW"/>
</dbReference>
<dbReference type="GO" id="GO:0030435">
    <property type="term" value="P:sporulation resulting in formation of a cellular spore"/>
    <property type="evidence" value="ECO:0007669"/>
    <property type="project" value="UniProtKB-KW"/>
</dbReference>
<keyword id="KW-0130">Cell adhesion</keyword>
<keyword id="KW-0325">Glycoprotein</keyword>
<keyword id="KW-1185">Reference proteome</keyword>
<keyword id="KW-0732">Signal</keyword>
<keyword id="KW-0749">Sporulation</keyword>
<accession>Q8SWL3</accession>
<sequence>MKLLGFLIVGLSAISALKTKALHLTCEQELRPYSAVVDANCMAFALNGSNIHEAIKYLQAMNIKKAYVLYWNDHDLRGTPMVLYDNGALAPFDPYTNTAKYVLCVEACPCPGSKAASVGGFQAATSSEKIYVEGSARPAQCSEVCIEPVERRPHYKKIVVNPSPSNCIPCEPECYDSSSSSECNKKRCKTFPRICKEKCGSRRRGCPRKVEVLKSQKTYTFDIEKYRRRGEVVVRVCSKDSKEKFERFILSRNGEIRGNNNKNCILEPLPKCLRCPGQLHKLKKHIERKVCQEVCMYINAKCDIFVLVGDCDFYRVVVNDRRRYRNLHLKKVRGHKLRELIKHGLFGVEFGPLDLDR</sequence>
<reference key="1">
    <citation type="journal article" date="2001" name="Genome Res.">
        <title>Sequence and analysis of chromosome I of the amitochondriate intracellular parasite Encephalitozoon cuniculi (Microspora).</title>
        <authorList>
            <person name="Peyret P."/>
            <person name="Katinka M.D."/>
            <person name="Duprat S."/>
            <person name="Duffieux F."/>
            <person name="Barbe V."/>
            <person name="Barbazanges M."/>
            <person name="Weissenbach J."/>
            <person name="Saurin W."/>
            <person name="Vivares C.P."/>
        </authorList>
    </citation>
    <scope>NUCLEOTIDE SEQUENCE [LARGE SCALE GENOMIC DNA]</scope>
    <source>
        <strain>GB-M1</strain>
    </source>
</reference>
<reference key="2">
    <citation type="journal article" date="2001" name="Nature">
        <title>Genome sequence and gene compaction of the eukaryote parasite Encephalitozoon cuniculi.</title>
        <authorList>
            <person name="Katinka M.D."/>
            <person name="Duprat S."/>
            <person name="Cornillot E."/>
            <person name="Metenier G."/>
            <person name="Thomarat F."/>
            <person name="Prensier G."/>
            <person name="Barbe V."/>
            <person name="Peyretaillade E."/>
            <person name="Brottier P."/>
            <person name="Wincker P."/>
            <person name="Delbac F."/>
            <person name="El Alaoui H."/>
            <person name="Peyret P."/>
            <person name="Saurin W."/>
            <person name="Gouy M."/>
            <person name="Weissenbach J."/>
            <person name="Vivares C.P."/>
        </authorList>
    </citation>
    <scope>NUCLEOTIDE SEQUENCE [LARGE SCALE GENOMIC DNA]</scope>
    <source>
        <strain>GB-M1</strain>
    </source>
</reference>
<reference key="3">
    <citation type="journal article" date="2006" name="Int. J. Parasitol.">
        <title>EnP1 and EnP2, two proteins associated with the Encephalitozoon cuniculi endospore, the chitin-rich inner layer of the microsporidian spore wall.</title>
        <authorList>
            <person name="Peuvel-Fanget I."/>
            <person name="Polonais V."/>
            <person name="Brosson D."/>
            <person name="Texier C."/>
            <person name="Kuhn L."/>
            <person name="Peyret P."/>
            <person name="Vivares C.P."/>
            <person name="Delbac F."/>
        </authorList>
    </citation>
    <scope>SUBCELLULAR LOCATION</scope>
</reference>
<reference key="4">
    <citation type="journal article" date="2006" name="Parasitology">
        <title>Expression of two cell wall proteins during the intracellular development of Encephalitozoon cuniculi: an immunocytochemical and in situ hybridization study with ultrathin frozen sections.</title>
        <authorList>
            <person name="Taupin V."/>
            <person name="Metenier G."/>
            <person name="Delbac F."/>
            <person name="Vivares C.P."/>
            <person name="Prensier G."/>
        </authorList>
    </citation>
    <scope>SUBCELLULAR LOCATION</scope>
    <scope>DEVELOPMENTAL STAGE</scope>
</reference>
<reference key="5">
    <citation type="journal article" date="2006" name="Proteomics">
        <title>Proteomic analysis of the eukaryotic parasite Encephalitozoon cuniculi (microsporidia): a reference map for proteins expressed in late sporogonial stages.</title>
        <authorList>
            <person name="Brosson D."/>
            <person name="Kuhn L."/>
            <person name="Delbac F."/>
            <person name="Garin J."/>
            <person name="Vivares C.P."/>
            <person name="Texier C."/>
        </authorList>
    </citation>
    <scope>IDENTIFICATION BY MASS SPECTROMETRY [LARGE SCALE ANALYSIS]</scope>
    <scope>DEVELOPMENTAL STAGE</scope>
</reference>
<reference key="6">
    <citation type="journal article" date="2007" name="Eukaryot. Cell">
        <title>EnP1, a microsporidian spore wall protein that enables spores to adhere to and infect host cells in vitro.</title>
        <authorList>
            <person name="Southern T.R."/>
            <person name="Jolly C.E."/>
            <person name="Lester M.E."/>
            <person name="Hayman J.R."/>
        </authorList>
    </citation>
    <scope>IDENTIFICATION BY MASS SPECTROMETRY</scope>
    <scope>DOMAIN</scope>
    <scope>SUBCELLULAR LOCATION</scope>
    <scope>FUNCTION</scope>
</reference>
<evidence type="ECO:0000255" key="1"/>
<evidence type="ECO:0000269" key="2">
    <source>
    </source>
</evidence>
<evidence type="ECO:0000269" key="3">
    <source>
    </source>
</evidence>
<evidence type="ECO:0000269" key="4">
    <source>
    </source>
</evidence>
<evidence type="ECO:0000269" key="5">
    <source>
    </source>
</evidence>
<feature type="signal peptide" evidence="1">
    <location>
        <begin position="1"/>
        <end position="16"/>
    </location>
</feature>
<feature type="chain" id="PRO_0000377523" description="Spore wall and anchoring disk complex protein EnP1">
    <location>
        <begin position="17"/>
        <end position="357"/>
    </location>
</feature>
<feature type="short sequence motif" description="HBM1">
    <location>
        <begin position="150"/>
        <end position="158"/>
    </location>
</feature>
<feature type="short sequence motif" description="HBM2">
    <location>
        <begin position="329"/>
        <end position="334"/>
    </location>
</feature>
<feature type="glycosylation site" description="N-linked (GlcNAc...) asparagine" evidence="1">
    <location>
        <position position="47"/>
    </location>
</feature>
<protein>
    <recommendedName>
        <fullName>Spore wall and anchoring disk complex protein EnP1</fullName>
    </recommendedName>
    <alternativeName>
        <fullName>Host cell adhesion protein EnP1</fullName>
    </alternativeName>
</protein>
<organism>
    <name type="scientific">Encephalitozoon cuniculi (strain GB-M1)</name>
    <name type="common">Microsporidian parasite</name>
    <dbReference type="NCBI Taxonomy" id="284813"/>
    <lineage>
        <taxon>Eukaryota</taxon>
        <taxon>Fungi</taxon>
        <taxon>Fungi incertae sedis</taxon>
        <taxon>Microsporidia</taxon>
        <taxon>Unikaryonidae</taxon>
        <taxon>Encephalitozoon</taxon>
    </lineage>
</organism>
<name>ENP1_ENCCU</name>
<comment type="function">
    <text evidence="5">Spore wall protein involved in the adhesion to host cells surface glycoaminoglycans (GAGs). Microsporidian spore adherence is an integral part of activation and host cell invasion which requires the extrusion at the spore apex of a very long and coiled structure, the polar tube, through which the sporoplasm is pushed to enter into the potential host cell.</text>
</comment>
<comment type="subcellular location">
    <subcellularLocation>
        <location evidence="2 3 5">Spore wall</location>
    </subcellularLocation>
    <subcellularLocation>
        <location evidence="3">Spore</location>
        <location evidence="3">Perispore</location>
    </subcellularLocation>
    <text evidence="5">Also localizes at the anchoring disk complex which consists of the polar sac and the anchoring disk, playing a crucial role in the rupture of the spore wall and the subsequent release of the polar tube following activation.</text>
</comment>
<comment type="developmental stage">
    <text evidence="3 4">Expressed during merogony and a large part of sporogony.</text>
</comment>
<comment type="domain">
    <text evidence="5">Heparin-binding motifs (HBMs) are characterized by an XBBXBX or XBBBXXBX sequence, where X is any neutral amino acid and B is a positively charged basic amino acid, and are defined as the consensus sequence necessary for protein-heparin interactions. HBM1 motif is necessary for spore adherence to host cells.</text>
</comment>
<comment type="online information" name="Protein Spotlight">
    <link uri="https://www.proteinspotlight.org/back_issues/110"/>
    <text>In like a shot - Issue 110 of October 2009</text>
</comment>